<name>RL36_DESAP</name>
<feature type="chain" id="PRO_1000101024" description="Large ribosomal subunit protein bL36">
    <location>
        <begin position="1"/>
        <end position="37"/>
    </location>
</feature>
<accession>B1I1M3</accession>
<reference key="1">
    <citation type="submission" date="2007-10" db="EMBL/GenBank/DDBJ databases">
        <title>Complete sequence of chromosome of Desulforudis audaxviator MP104C.</title>
        <authorList>
            <person name="Copeland A."/>
            <person name="Lucas S."/>
            <person name="Lapidus A."/>
            <person name="Barry K."/>
            <person name="Glavina del Rio T."/>
            <person name="Dalin E."/>
            <person name="Tice H."/>
            <person name="Bruce D."/>
            <person name="Pitluck S."/>
            <person name="Lowry S.R."/>
            <person name="Larimer F."/>
            <person name="Land M.L."/>
            <person name="Hauser L."/>
            <person name="Kyrpides N."/>
            <person name="Ivanova N.N."/>
            <person name="Richardson P."/>
        </authorList>
    </citation>
    <scope>NUCLEOTIDE SEQUENCE [LARGE SCALE GENOMIC DNA]</scope>
    <source>
        <strain>MP104C</strain>
    </source>
</reference>
<proteinExistence type="inferred from homology"/>
<protein>
    <recommendedName>
        <fullName evidence="1">Large ribosomal subunit protein bL36</fullName>
    </recommendedName>
    <alternativeName>
        <fullName evidence="2">50S ribosomal protein L36</fullName>
    </alternativeName>
</protein>
<evidence type="ECO:0000255" key="1">
    <source>
        <dbReference type="HAMAP-Rule" id="MF_00251"/>
    </source>
</evidence>
<evidence type="ECO:0000305" key="2"/>
<sequence>MKVKPSVKTVCEKCKVIRRKGKVVIICSNAKHKQRQG</sequence>
<organism>
    <name type="scientific">Desulforudis audaxviator (strain MP104C)</name>
    <dbReference type="NCBI Taxonomy" id="477974"/>
    <lineage>
        <taxon>Bacteria</taxon>
        <taxon>Bacillati</taxon>
        <taxon>Bacillota</taxon>
        <taxon>Clostridia</taxon>
        <taxon>Thermoanaerobacterales</taxon>
        <taxon>Candidatus Desulforudaceae</taxon>
        <taxon>Candidatus Desulforudis</taxon>
    </lineage>
</organism>
<dbReference type="EMBL" id="CP000860">
    <property type="protein sequence ID" value="ACA58810.1"/>
    <property type="molecule type" value="Genomic_DNA"/>
</dbReference>
<dbReference type="RefSeq" id="WP_012301402.1">
    <property type="nucleotide sequence ID" value="NC_010424.1"/>
</dbReference>
<dbReference type="SMR" id="B1I1M3"/>
<dbReference type="STRING" id="477974.Daud_0249"/>
<dbReference type="KEGG" id="dau:Daud_0249"/>
<dbReference type="eggNOG" id="COG0257">
    <property type="taxonomic scope" value="Bacteria"/>
</dbReference>
<dbReference type="HOGENOM" id="CLU_135723_6_2_9"/>
<dbReference type="OrthoDB" id="9802520at2"/>
<dbReference type="Proteomes" id="UP000008544">
    <property type="component" value="Chromosome"/>
</dbReference>
<dbReference type="GO" id="GO:0005737">
    <property type="term" value="C:cytoplasm"/>
    <property type="evidence" value="ECO:0007669"/>
    <property type="project" value="UniProtKB-ARBA"/>
</dbReference>
<dbReference type="GO" id="GO:1990904">
    <property type="term" value="C:ribonucleoprotein complex"/>
    <property type="evidence" value="ECO:0007669"/>
    <property type="project" value="UniProtKB-KW"/>
</dbReference>
<dbReference type="GO" id="GO:0005840">
    <property type="term" value="C:ribosome"/>
    <property type="evidence" value="ECO:0007669"/>
    <property type="project" value="UniProtKB-KW"/>
</dbReference>
<dbReference type="GO" id="GO:0003735">
    <property type="term" value="F:structural constituent of ribosome"/>
    <property type="evidence" value="ECO:0007669"/>
    <property type="project" value="InterPro"/>
</dbReference>
<dbReference type="GO" id="GO:0006412">
    <property type="term" value="P:translation"/>
    <property type="evidence" value="ECO:0007669"/>
    <property type="project" value="UniProtKB-UniRule"/>
</dbReference>
<dbReference type="HAMAP" id="MF_00251">
    <property type="entry name" value="Ribosomal_bL36"/>
    <property type="match status" value="1"/>
</dbReference>
<dbReference type="InterPro" id="IPR000473">
    <property type="entry name" value="Ribosomal_bL36"/>
</dbReference>
<dbReference type="InterPro" id="IPR035977">
    <property type="entry name" value="Ribosomal_bL36_sp"/>
</dbReference>
<dbReference type="NCBIfam" id="TIGR01022">
    <property type="entry name" value="rpmJ_bact"/>
    <property type="match status" value="1"/>
</dbReference>
<dbReference type="PANTHER" id="PTHR42888">
    <property type="entry name" value="50S RIBOSOMAL PROTEIN L36, CHLOROPLASTIC"/>
    <property type="match status" value="1"/>
</dbReference>
<dbReference type="PANTHER" id="PTHR42888:SF1">
    <property type="entry name" value="LARGE RIBOSOMAL SUBUNIT PROTEIN BL36C"/>
    <property type="match status" value="1"/>
</dbReference>
<dbReference type="Pfam" id="PF00444">
    <property type="entry name" value="Ribosomal_L36"/>
    <property type="match status" value="1"/>
</dbReference>
<dbReference type="SUPFAM" id="SSF57840">
    <property type="entry name" value="Ribosomal protein L36"/>
    <property type="match status" value="1"/>
</dbReference>
<dbReference type="PROSITE" id="PS00828">
    <property type="entry name" value="RIBOSOMAL_L36"/>
    <property type="match status" value="1"/>
</dbReference>
<comment type="similarity">
    <text evidence="1">Belongs to the bacterial ribosomal protein bL36 family.</text>
</comment>
<keyword id="KW-1185">Reference proteome</keyword>
<keyword id="KW-0687">Ribonucleoprotein</keyword>
<keyword id="KW-0689">Ribosomal protein</keyword>
<gene>
    <name evidence="1" type="primary">rpmJ</name>
    <name type="ordered locus">Daud_0249</name>
</gene>